<reference key="1">
    <citation type="journal article" date="2007" name="J. Bacteriol.">
        <title>Genome sequence and analysis of the soil cellulolytic actinomycete Thermobifida fusca YX.</title>
        <authorList>
            <person name="Lykidis A."/>
            <person name="Mavromatis K."/>
            <person name="Ivanova N."/>
            <person name="Anderson I."/>
            <person name="Land M."/>
            <person name="DiBartolo G."/>
            <person name="Martinez M."/>
            <person name="Lapidus A."/>
            <person name="Lucas S."/>
            <person name="Copeland A."/>
            <person name="Richardson P."/>
            <person name="Wilson D.B."/>
            <person name="Kyrpides N."/>
        </authorList>
    </citation>
    <scope>NUCLEOTIDE SEQUENCE [LARGE SCALE GENOMIC DNA]</scope>
    <source>
        <strain>YX</strain>
    </source>
</reference>
<evidence type="ECO:0000255" key="1">
    <source>
        <dbReference type="HAMAP-Rule" id="MF_00218"/>
    </source>
</evidence>
<comment type="function">
    <text evidence="1">Catalyzes the decarboxylation of four acetate groups of uroporphyrinogen-III to yield coproporphyrinogen-III.</text>
</comment>
<comment type="catalytic activity">
    <reaction evidence="1">
        <text>uroporphyrinogen III + 4 H(+) = coproporphyrinogen III + 4 CO2</text>
        <dbReference type="Rhea" id="RHEA:19865"/>
        <dbReference type="ChEBI" id="CHEBI:15378"/>
        <dbReference type="ChEBI" id="CHEBI:16526"/>
        <dbReference type="ChEBI" id="CHEBI:57308"/>
        <dbReference type="ChEBI" id="CHEBI:57309"/>
        <dbReference type="EC" id="4.1.1.37"/>
    </reaction>
</comment>
<comment type="pathway">
    <text evidence="1">Porphyrin-containing compound metabolism; protoporphyrin-IX biosynthesis; coproporphyrinogen-III from 5-aminolevulinate: step 4/4.</text>
</comment>
<comment type="subunit">
    <text evidence="1">Homodimer.</text>
</comment>
<comment type="subcellular location">
    <subcellularLocation>
        <location evidence="1">Cytoplasm</location>
    </subcellularLocation>
</comment>
<comment type="similarity">
    <text evidence="1">Belongs to the uroporphyrinogen decarboxylase family.</text>
</comment>
<protein>
    <recommendedName>
        <fullName evidence="1">Uroporphyrinogen decarboxylase</fullName>
        <shortName evidence="1">UPD</shortName>
        <shortName evidence="1">URO-D</shortName>
        <ecNumber evidence="1">4.1.1.37</ecNumber>
    </recommendedName>
</protein>
<feature type="chain" id="PRO_0000325703" description="Uroporphyrinogen decarboxylase">
    <location>
        <begin position="1"/>
        <end position="361"/>
    </location>
</feature>
<feature type="binding site" evidence="1">
    <location>
        <begin position="44"/>
        <end position="48"/>
    </location>
    <ligand>
        <name>substrate</name>
    </ligand>
</feature>
<feature type="binding site" evidence="1">
    <location>
        <position position="93"/>
    </location>
    <ligand>
        <name>substrate</name>
    </ligand>
</feature>
<feature type="binding site" evidence="1">
    <location>
        <position position="168"/>
    </location>
    <ligand>
        <name>substrate</name>
    </ligand>
</feature>
<feature type="binding site" evidence="1">
    <location>
        <position position="223"/>
    </location>
    <ligand>
        <name>substrate</name>
    </ligand>
</feature>
<feature type="binding site" evidence="1">
    <location>
        <position position="337"/>
    </location>
    <ligand>
        <name>substrate</name>
    </ligand>
</feature>
<feature type="site" description="Transition state stabilizer" evidence="1">
    <location>
        <position position="93"/>
    </location>
</feature>
<name>DCUP_THEFY</name>
<proteinExistence type="inferred from homology"/>
<gene>
    <name evidence="1" type="primary">hemE</name>
    <name type="ordered locus">Tfu_1899</name>
</gene>
<dbReference type="EC" id="4.1.1.37" evidence="1"/>
<dbReference type="EMBL" id="CP000088">
    <property type="protein sequence ID" value="AAZ55932.1"/>
    <property type="molecule type" value="Genomic_DNA"/>
</dbReference>
<dbReference type="SMR" id="Q47NN7"/>
<dbReference type="STRING" id="269800.Tfu_1899"/>
<dbReference type="KEGG" id="tfu:Tfu_1899"/>
<dbReference type="eggNOG" id="COG0407">
    <property type="taxonomic scope" value="Bacteria"/>
</dbReference>
<dbReference type="HOGENOM" id="CLU_040933_0_1_11"/>
<dbReference type="UniPathway" id="UPA00251">
    <property type="reaction ID" value="UER00321"/>
</dbReference>
<dbReference type="GO" id="GO:0005829">
    <property type="term" value="C:cytosol"/>
    <property type="evidence" value="ECO:0007669"/>
    <property type="project" value="TreeGrafter"/>
</dbReference>
<dbReference type="GO" id="GO:0004853">
    <property type="term" value="F:uroporphyrinogen decarboxylase activity"/>
    <property type="evidence" value="ECO:0007669"/>
    <property type="project" value="UniProtKB-UniRule"/>
</dbReference>
<dbReference type="GO" id="GO:0006782">
    <property type="term" value="P:protoporphyrinogen IX biosynthetic process"/>
    <property type="evidence" value="ECO:0007669"/>
    <property type="project" value="UniProtKB-UniRule"/>
</dbReference>
<dbReference type="CDD" id="cd00717">
    <property type="entry name" value="URO-D"/>
    <property type="match status" value="1"/>
</dbReference>
<dbReference type="Gene3D" id="3.20.20.210">
    <property type="match status" value="1"/>
</dbReference>
<dbReference type="HAMAP" id="MF_00218">
    <property type="entry name" value="URO_D"/>
    <property type="match status" value="1"/>
</dbReference>
<dbReference type="InterPro" id="IPR038071">
    <property type="entry name" value="UROD/MetE-like_sf"/>
</dbReference>
<dbReference type="InterPro" id="IPR006361">
    <property type="entry name" value="Uroporphyrinogen_deCO2ase_HemE"/>
</dbReference>
<dbReference type="InterPro" id="IPR000257">
    <property type="entry name" value="Uroporphyrinogen_deCOase"/>
</dbReference>
<dbReference type="NCBIfam" id="TIGR01464">
    <property type="entry name" value="hemE"/>
    <property type="match status" value="1"/>
</dbReference>
<dbReference type="PANTHER" id="PTHR21091">
    <property type="entry name" value="METHYLTETRAHYDROFOLATE:HOMOCYSTEINE METHYLTRANSFERASE RELATED"/>
    <property type="match status" value="1"/>
</dbReference>
<dbReference type="PANTHER" id="PTHR21091:SF169">
    <property type="entry name" value="UROPORPHYRINOGEN DECARBOXYLASE"/>
    <property type="match status" value="1"/>
</dbReference>
<dbReference type="Pfam" id="PF01208">
    <property type="entry name" value="URO-D"/>
    <property type="match status" value="1"/>
</dbReference>
<dbReference type="SUPFAM" id="SSF51726">
    <property type="entry name" value="UROD/MetE-like"/>
    <property type="match status" value="1"/>
</dbReference>
<dbReference type="PROSITE" id="PS00906">
    <property type="entry name" value="UROD_1"/>
    <property type="match status" value="1"/>
</dbReference>
<dbReference type="PROSITE" id="PS00907">
    <property type="entry name" value="UROD_2"/>
    <property type="match status" value="1"/>
</dbReference>
<keyword id="KW-0963">Cytoplasm</keyword>
<keyword id="KW-0210">Decarboxylase</keyword>
<keyword id="KW-0456">Lyase</keyword>
<keyword id="KW-0627">Porphyrin biosynthesis</keyword>
<organism>
    <name type="scientific">Thermobifida fusca (strain YX)</name>
    <dbReference type="NCBI Taxonomy" id="269800"/>
    <lineage>
        <taxon>Bacteria</taxon>
        <taxon>Bacillati</taxon>
        <taxon>Actinomycetota</taxon>
        <taxon>Actinomycetes</taxon>
        <taxon>Streptosporangiales</taxon>
        <taxon>Nocardiopsidaceae</taxon>
        <taxon>Thermobifida</taxon>
    </lineage>
</organism>
<accession>Q47NN7</accession>
<sequence>MILGHAARSLREHGTIRSVTLQDSAFLRACRRQPVPHTPVWFMRQAGRSLPEYRKLREGVPMLEACARPDMIVEITLQPVRRYNVDAAIFFSDIMVPLKAIGVDLDIKPGVGPVVAEPIRDLAATRRLRGLEPDDVPYVTEAIRELVRELGSRPLIGFAGGPFTLASYLIEGGPSRHHEHTKALMYGAPEVWTELMRRLSAITLEFLRVQIAAGASAVQLFDSWVGALSAEDYRANVLPYSSWIFAQLAEFDVPRIHFGVGTGELLGLLSEAGADVVGVDWRVPLDQAARRVRPHTALQGNLDPAVLFAPWSVVAERTDDVLARAKAAEGHVFNLGHGVLPTTDPAVLERLVEYVHTQTAN</sequence>